<evidence type="ECO:0000250" key="1">
    <source>
        <dbReference type="UniProtKB" id="Q8IV32"/>
    </source>
</evidence>
<evidence type="ECO:0000255" key="2"/>
<evidence type="ECO:0000256" key="3">
    <source>
        <dbReference type="SAM" id="MobiDB-lite"/>
    </source>
</evidence>
<keyword id="KW-0175">Coiled coil</keyword>
<keyword id="KW-0597">Phosphoprotein</keyword>
<keyword id="KW-1185">Reference proteome</keyword>
<organism>
    <name type="scientific">Rattus norvegicus</name>
    <name type="common">Rat</name>
    <dbReference type="NCBI Taxonomy" id="10116"/>
    <lineage>
        <taxon>Eukaryota</taxon>
        <taxon>Metazoa</taxon>
        <taxon>Chordata</taxon>
        <taxon>Craniata</taxon>
        <taxon>Vertebrata</taxon>
        <taxon>Euteleostomi</taxon>
        <taxon>Mammalia</taxon>
        <taxon>Eutheria</taxon>
        <taxon>Euarchontoglires</taxon>
        <taxon>Glires</taxon>
        <taxon>Rodentia</taxon>
        <taxon>Myomorpha</taxon>
        <taxon>Muroidea</taxon>
        <taxon>Muridae</taxon>
        <taxon>Murinae</taxon>
        <taxon>Rattus</taxon>
    </lineage>
</organism>
<gene>
    <name type="primary">Ccdc71</name>
</gene>
<sequence length="436" mass="46462">MSMVVQHVEEKAVHSWSRISTAGKKALEEALLVFNPMSQDLSATEAQLVAFLQGLRDDGFQPTILRSGDVYGYSSCTASPPSQTKLQARTINPPATSLPARAPQTAKSVPTGQTTLLPVPLSGRLAKGSTPALAKHTTTNLLLSSLKQSNASNTSGTTVGFPAHLYPGVYPAMQLSVVLEALVPLKTPCLDVKHRAQSLQLSLAKSSLKLRKGSGNPQSKAPRRITSKGLKYLTSKGPGAGLRRGAGTQSNGARMKGRSTLGTKTVRGKAPRTLTKAVCARASVAPAKTKTVRVRAKVKQAKPKAAKAKAKAAALRGKAKDKAVQAKAKAARTKHKKRPKGYVQTRTGRTSLKNSSETVGQKRKKAEETKGLPPKKRARCVPRSKARLGTGTAKPQKSQTIKVDRKCSDDEVRQCAQQILRVNLSPVVLLQPLLPV</sequence>
<dbReference type="EMBL" id="BC098020">
    <property type="protein sequence ID" value="AAH98020.1"/>
    <property type="molecule type" value="mRNA"/>
</dbReference>
<dbReference type="RefSeq" id="NP_001020075.1">
    <property type="nucleotide sequence ID" value="NM_001024904.1"/>
</dbReference>
<dbReference type="RefSeq" id="XP_006243897.1">
    <property type="nucleotide sequence ID" value="XM_006243835.3"/>
</dbReference>
<dbReference type="RefSeq" id="XP_038937831.1">
    <property type="nucleotide sequence ID" value="XM_039081903.2"/>
</dbReference>
<dbReference type="SMR" id="Q4V7C4"/>
<dbReference type="FunCoup" id="Q4V7C4">
    <property type="interactions" value="1380"/>
</dbReference>
<dbReference type="STRING" id="10116.ENSRNOP00000065526"/>
<dbReference type="PhosphoSitePlus" id="Q4V7C4"/>
<dbReference type="PaxDb" id="10116-ENSRNOP00000065526"/>
<dbReference type="Ensembl" id="ENSRNOT00000100156.1">
    <property type="protein sequence ID" value="ENSRNOP00000097250.1"/>
    <property type="gene ID" value="ENSRNOG00000048718.2"/>
</dbReference>
<dbReference type="Ensembl" id="ENSRNOT00000102898.1">
    <property type="protein sequence ID" value="ENSRNOP00000092360.1"/>
    <property type="gene ID" value="ENSRNOG00000048718.2"/>
</dbReference>
<dbReference type="GeneID" id="498678"/>
<dbReference type="KEGG" id="rno:498678"/>
<dbReference type="AGR" id="RGD:1566341"/>
<dbReference type="CTD" id="64925"/>
<dbReference type="RGD" id="1566341">
    <property type="gene designation" value="Ccdc71"/>
</dbReference>
<dbReference type="eggNOG" id="ENOG502RY9H">
    <property type="taxonomic scope" value="Eukaryota"/>
</dbReference>
<dbReference type="GeneTree" id="ENSGT00940000155306"/>
<dbReference type="HOGENOM" id="CLU_049410_1_0_1"/>
<dbReference type="InParanoid" id="Q4V7C4"/>
<dbReference type="OMA" id="CPETVGQ"/>
<dbReference type="OrthoDB" id="8522252at2759"/>
<dbReference type="PhylomeDB" id="Q4V7C4"/>
<dbReference type="PRO" id="PR:Q4V7C4"/>
<dbReference type="Proteomes" id="UP000002494">
    <property type="component" value="Chromosome 8"/>
</dbReference>
<dbReference type="Bgee" id="ENSRNOG00000048718">
    <property type="expression patterns" value="Expressed in skeletal muscle tissue and 18 other cell types or tissues"/>
</dbReference>
<dbReference type="InterPro" id="IPR026695">
    <property type="entry name" value="Ccdc71/71L"/>
</dbReference>
<dbReference type="PANTHER" id="PTHR14484">
    <property type="entry name" value="COILED-COIL DOMAIN-CONTAINING PROTEIN 71"/>
    <property type="match status" value="1"/>
</dbReference>
<dbReference type="PANTHER" id="PTHR14484:SF0">
    <property type="entry name" value="COILED-COIL DOMAIN-CONTAINING PROTEIN 71"/>
    <property type="match status" value="1"/>
</dbReference>
<dbReference type="Pfam" id="PF15374">
    <property type="entry name" value="CCDC71L"/>
    <property type="match status" value="2"/>
</dbReference>
<reference key="1">
    <citation type="journal article" date="2004" name="Genome Res.">
        <title>The status, quality, and expansion of the NIH full-length cDNA project: the Mammalian Gene Collection (MGC).</title>
        <authorList>
            <consortium name="The MGC Project Team"/>
        </authorList>
    </citation>
    <scope>NUCLEOTIDE SEQUENCE [LARGE SCALE MRNA]</scope>
    <source>
        <tissue>Testis</tissue>
    </source>
</reference>
<name>CCD71_RAT</name>
<accession>Q4V7C4</accession>
<proteinExistence type="evidence at transcript level"/>
<feature type="chain" id="PRO_0000234423" description="Coiled-coil domain-containing protein 71">
    <location>
        <begin position="1"/>
        <end position="436"/>
    </location>
</feature>
<feature type="region of interest" description="Disordered" evidence="3">
    <location>
        <begin position="95"/>
        <end position="119"/>
    </location>
</feature>
<feature type="region of interest" description="Disordered" evidence="3">
    <location>
        <begin position="210"/>
        <end position="258"/>
    </location>
</feature>
<feature type="region of interest" description="Disordered" evidence="3">
    <location>
        <begin position="314"/>
        <end position="405"/>
    </location>
</feature>
<feature type="coiled-coil region" evidence="2">
    <location>
        <begin position="264"/>
        <end position="334"/>
    </location>
</feature>
<feature type="compositionally biased region" description="Polar residues" evidence="3">
    <location>
        <begin position="105"/>
        <end position="116"/>
    </location>
</feature>
<feature type="compositionally biased region" description="Basic residues" evidence="3">
    <location>
        <begin position="329"/>
        <end position="340"/>
    </location>
</feature>
<feature type="compositionally biased region" description="Polar residues" evidence="3">
    <location>
        <begin position="344"/>
        <end position="359"/>
    </location>
</feature>
<feature type="compositionally biased region" description="Basic residues" evidence="3">
    <location>
        <begin position="373"/>
        <end position="386"/>
    </location>
</feature>
<feature type="modified residue" description="Phosphoserine" evidence="1">
    <location>
        <position position="129"/>
    </location>
</feature>
<protein>
    <recommendedName>
        <fullName>Coiled-coil domain-containing protein 71</fullName>
    </recommendedName>
</protein>